<protein>
    <recommendedName>
        <fullName>ATP-dependent RNA helicase DBP4</fullName>
        <ecNumber>3.6.4.13</ecNumber>
    </recommendedName>
</protein>
<comment type="function">
    <text evidence="1">ATP-dependent RNA helicase required for ribosome biogenesis. Involved in the release of U14 snoRNA in pre-ribosomal complexes. Required for pre-rRNA cleavage at site A2 (By similarity).</text>
</comment>
<comment type="catalytic activity">
    <reaction>
        <text>ATP + H2O = ADP + phosphate + H(+)</text>
        <dbReference type="Rhea" id="RHEA:13065"/>
        <dbReference type="ChEBI" id="CHEBI:15377"/>
        <dbReference type="ChEBI" id="CHEBI:15378"/>
        <dbReference type="ChEBI" id="CHEBI:30616"/>
        <dbReference type="ChEBI" id="CHEBI:43474"/>
        <dbReference type="ChEBI" id="CHEBI:456216"/>
        <dbReference type="EC" id="3.6.4.13"/>
    </reaction>
</comment>
<comment type="subunit">
    <text evidence="1">Interacts with the U3 and U14 snoRNAs. Associates with pre-ribosomal complexes (By similarity).</text>
</comment>
<comment type="subcellular location">
    <subcellularLocation>
        <location evidence="1">Nucleus</location>
        <location evidence="1">Nucleolus</location>
    </subcellularLocation>
</comment>
<comment type="domain">
    <text>The Q motif is unique to and characteristic of the DEAD box family of RNA helicases and controls ATP binding and hydrolysis.</text>
</comment>
<comment type="similarity">
    <text evidence="5">Belongs to the DEAD box helicase family. DDX10/DBP4 subfamily.</text>
</comment>
<accession>A5DLF4</accession>
<feature type="chain" id="PRO_0000294624" description="ATP-dependent RNA helicase DBP4">
    <location>
        <begin position="1"/>
        <end position="754"/>
    </location>
</feature>
<feature type="domain" description="Helicase ATP-binding" evidence="2">
    <location>
        <begin position="77"/>
        <end position="251"/>
    </location>
</feature>
<feature type="domain" description="Helicase C-terminal" evidence="3">
    <location>
        <begin position="265"/>
        <end position="429"/>
    </location>
</feature>
<feature type="region of interest" description="Disordered" evidence="4">
    <location>
        <begin position="1"/>
        <end position="22"/>
    </location>
</feature>
<feature type="region of interest" description="Disordered" evidence="4">
    <location>
        <begin position="575"/>
        <end position="604"/>
    </location>
</feature>
<feature type="region of interest" description="Disordered" evidence="4">
    <location>
        <begin position="638"/>
        <end position="731"/>
    </location>
</feature>
<feature type="short sequence motif" description="Q motif">
    <location>
        <begin position="46"/>
        <end position="74"/>
    </location>
</feature>
<feature type="short sequence motif" description="DEAD box">
    <location>
        <begin position="199"/>
        <end position="202"/>
    </location>
</feature>
<feature type="compositionally biased region" description="Basic residues" evidence="4">
    <location>
        <begin position="583"/>
        <end position="595"/>
    </location>
</feature>
<feature type="compositionally biased region" description="Basic and acidic residues" evidence="4">
    <location>
        <begin position="638"/>
        <end position="661"/>
    </location>
</feature>
<feature type="compositionally biased region" description="Basic and acidic residues" evidence="4">
    <location>
        <begin position="668"/>
        <end position="678"/>
    </location>
</feature>
<feature type="compositionally biased region" description="Basic and acidic residues" evidence="4">
    <location>
        <begin position="696"/>
        <end position="708"/>
    </location>
</feature>
<feature type="binding site" evidence="2">
    <location>
        <begin position="90"/>
        <end position="97"/>
    </location>
    <ligand>
        <name>ATP</name>
        <dbReference type="ChEBI" id="CHEBI:30616"/>
    </ligand>
</feature>
<reference key="1">
    <citation type="journal article" date="2009" name="Nature">
        <title>Evolution of pathogenicity and sexual reproduction in eight Candida genomes.</title>
        <authorList>
            <person name="Butler G."/>
            <person name="Rasmussen M.D."/>
            <person name="Lin M.F."/>
            <person name="Santos M.A.S."/>
            <person name="Sakthikumar S."/>
            <person name="Munro C.A."/>
            <person name="Rheinbay E."/>
            <person name="Grabherr M."/>
            <person name="Forche A."/>
            <person name="Reedy J.L."/>
            <person name="Agrafioti I."/>
            <person name="Arnaud M.B."/>
            <person name="Bates S."/>
            <person name="Brown A.J.P."/>
            <person name="Brunke S."/>
            <person name="Costanzo M.C."/>
            <person name="Fitzpatrick D.A."/>
            <person name="de Groot P.W.J."/>
            <person name="Harris D."/>
            <person name="Hoyer L.L."/>
            <person name="Hube B."/>
            <person name="Klis F.M."/>
            <person name="Kodira C."/>
            <person name="Lennard N."/>
            <person name="Logue M.E."/>
            <person name="Martin R."/>
            <person name="Neiman A.M."/>
            <person name="Nikolaou E."/>
            <person name="Quail M.A."/>
            <person name="Quinn J."/>
            <person name="Santos M.C."/>
            <person name="Schmitzberger F.F."/>
            <person name="Sherlock G."/>
            <person name="Shah P."/>
            <person name="Silverstein K.A.T."/>
            <person name="Skrzypek M.S."/>
            <person name="Soll D."/>
            <person name="Staggs R."/>
            <person name="Stansfield I."/>
            <person name="Stumpf M.P.H."/>
            <person name="Sudbery P.E."/>
            <person name="Srikantha T."/>
            <person name="Zeng Q."/>
            <person name="Berman J."/>
            <person name="Berriman M."/>
            <person name="Heitman J."/>
            <person name="Gow N.A.R."/>
            <person name="Lorenz M.C."/>
            <person name="Birren B.W."/>
            <person name="Kellis M."/>
            <person name="Cuomo C.A."/>
        </authorList>
    </citation>
    <scope>NUCLEOTIDE SEQUENCE [LARGE SCALE GENOMIC DNA]</scope>
    <source>
        <strain>ATCC 6260 / CBS 566 / DSM 6381 / JCM 1539 / NBRC 10279 / NRRL Y-324</strain>
    </source>
</reference>
<name>DBP4_PICGU</name>
<proteinExistence type="inferred from homology"/>
<sequence length="754" mass="85220">MAKPKKGAKVNNPNRKSRNQKVLQTIADLQKRIDEYDPATDEQSISQFKHLPISEGTYKGLLENNFVSLTDIQKKAIPVALKSEDVMGTARTGSGKTLAFLVPVIEKLIRENITEYDGLAALIVSPTRELAVQTFEVLTKIGKYNSFSAGLVTGGKDVKYEKERISRMNILIGTPGRISQHLNEAVGMETSNLQVLVLDEADRCLDMGFRKQIDNILGHLPVTRQTLLFSATQSDNVKDLARLSLVNPKRVGVSSDQEVSSIPESLEQYYIKISLASKMDVLWSFLKSHLKSKILVFFSSSKQVQFAYEAFRRLQPGISLLKLYGRHKQTSRLETTMKFSRAQHACLFATDIVARGLDFPAIDWVVQVDCPEDAATYVHRVGRAARFGRQGKSLLMLAPSEEEGMVKRLEAHKISLKMMNIKQKNKKVISPQLQSLCFQDPELKNLGQRAFISYMKSVHIQKDKDIFKVEELPAAEYAKALGLPGTPNINIKNGAGNKDKKNMSRELLALQKPEKQKSDSEKVRTKYDRMFERQNQTVLSKNYLNMAAGDDSGSEDDFMSVKRKDHIIKDEELPDLSVPVSKRQSKKALSKKASLKSKGNPTKLIFDDEGVTHHLYEFEDEEDFKSRGDAKLQKAEFVSKENEAMSKADVDDKATAREKRQEKKRRWKEQERLAREQDEFSGSEDEAHTVTLAGADIDRDMDYGRSSEDEQPPSKKPKWFEQEKPKKKKVDIVEVEEPETLEDLEALTAKLIGS</sequence>
<gene>
    <name type="primary">DBP4</name>
    <name type="ORF">PGUG_04105</name>
</gene>
<keyword id="KW-0067">ATP-binding</keyword>
<keyword id="KW-0347">Helicase</keyword>
<keyword id="KW-0378">Hydrolase</keyword>
<keyword id="KW-0547">Nucleotide-binding</keyword>
<keyword id="KW-0539">Nucleus</keyword>
<keyword id="KW-1185">Reference proteome</keyword>
<keyword id="KW-0690">Ribosome biogenesis</keyword>
<keyword id="KW-0694">RNA-binding</keyword>
<keyword id="KW-0698">rRNA processing</keyword>
<evidence type="ECO:0000250" key="1"/>
<evidence type="ECO:0000255" key="2">
    <source>
        <dbReference type="PROSITE-ProRule" id="PRU00541"/>
    </source>
</evidence>
<evidence type="ECO:0000255" key="3">
    <source>
        <dbReference type="PROSITE-ProRule" id="PRU00542"/>
    </source>
</evidence>
<evidence type="ECO:0000256" key="4">
    <source>
        <dbReference type="SAM" id="MobiDB-lite"/>
    </source>
</evidence>
<evidence type="ECO:0000305" key="5"/>
<dbReference type="EC" id="3.6.4.13"/>
<dbReference type="EMBL" id="CH408159">
    <property type="protein sequence ID" value="EDK40007.2"/>
    <property type="molecule type" value="Genomic_DNA"/>
</dbReference>
<dbReference type="RefSeq" id="XP_001483376.1">
    <property type="nucleotide sequence ID" value="XM_001483326.1"/>
</dbReference>
<dbReference type="SMR" id="A5DLF4"/>
<dbReference type="FunCoup" id="A5DLF4">
    <property type="interactions" value="1063"/>
</dbReference>
<dbReference type="STRING" id="294746.A5DLF4"/>
<dbReference type="GeneID" id="5125326"/>
<dbReference type="KEGG" id="pgu:PGUG_04105"/>
<dbReference type="eggNOG" id="KOG0343">
    <property type="taxonomic scope" value="Eukaryota"/>
</dbReference>
<dbReference type="HOGENOM" id="CLU_003041_26_1_1"/>
<dbReference type="InParanoid" id="A5DLF4"/>
<dbReference type="OMA" id="YDKMFER"/>
<dbReference type="OrthoDB" id="10259640at2759"/>
<dbReference type="Proteomes" id="UP000001997">
    <property type="component" value="Unassembled WGS sequence"/>
</dbReference>
<dbReference type="GO" id="GO:0005730">
    <property type="term" value="C:nucleolus"/>
    <property type="evidence" value="ECO:0007669"/>
    <property type="project" value="UniProtKB-SubCell"/>
</dbReference>
<dbReference type="GO" id="GO:0032040">
    <property type="term" value="C:small-subunit processome"/>
    <property type="evidence" value="ECO:0007669"/>
    <property type="project" value="EnsemblFungi"/>
</dbReference>
<dbReference type="GO" id="GO:0005524">
    <property type="term" value="F:ATP binding"/>
    <property type="evidence" value="ECO:0007669"/>
    <property type="project" value="UniProtKB-KW"/>
</dbReference>
<dbReference type="GO" id="GO:0016887">
    <property type="term" value="F:ATP hydrolysis activity"/>
    <property type="evidence" value="ECO:0007669"/>
    <property type="project" value="RHEA"/>
</dbReference>
<dbReference type="GO" id="GO:0042802">
    <property type="term" value="F:identical protein binding"/>
    <property type="evidence" value="ECO:0007669"/>
    <property type="project" value="EnsemblFungi"/>
</dbReference>
<dbReference type="GO" id="GO:0003723">
    <property type="term" value="F:RNA binding"/>
    <property type="evidence" value="ECO:0007669"/>
    <property type="project" value="UniProtKB-KW"/>
</dbReference>
<dbReference type="GO" id="GO:0003724">
    <property type="term" value="F:RNA helicase activity"/>
    <property type="evidence" value="ECO:0007669"/>
    <property type="project" value="UniProtKB-EC"/>
</dbReference>
<dbReference type="GO" id="GO:0006364">
    <property type="term" value="P:rRNA processing"/>
    <property type="evidence" value="ECO:0007669"/>
    <property type="project" value="UniProtKB-KW"/>
</dbReference>
<dbReference type="CDD" id="cd17941">
    <property type="entry name" value="DEADc_DDX10"/>
    <property type="match status" value="1"/>
</dbReference>
<dbReference type="CDD" id="cd18787">
    <property type="entry name" value="SF2_C_DEAD"/>
    <property type="match status" value="1"/>
</dbReference>
<dbReference type="Gene3D" id="3.40.50.300">
    <property type="entry name" value="P-loop containing nucleotide triphosphate hydrolases"/>
    <property type="match status" value="2"/>
</dbReference>
<dbReference type="InterPro" id="IPR011545">
    <property type="entry name" value="DEAD/DEAH_box_helicase_dom"/>
</dbReference>
<dbReference type="InterPro" id="IPR014001">
    <property type="entry name" value="Helicase_ATP-bd"/>
</dbReference>
<dbReference type="InterPro" id="IPR001650">
    <property type="entry name" value="Helicase_C-like"/>
</dbReference>
<dbReference type="InterPro" id="IPR027417">
    <property type="entry name" value="P-loop_NTPase"/>
</dbReference>
<dbReference type="InterPro" id="IPR000629">
    <property type="entry name" value="RNA-helicase_DEAD-box_CS"/>
</dbReference>
<dbReference type="InterPro" id="IPR025313">
    <property type="entry name" value="SPB4-like_CTE"/>
</dbReference>
<dbReference type="PANTHER" id="PTHR24031">
    <property type="entry name" value="RNA HELICASE"/>
    <property type="match status" value="1"/>
</dbReference>
<dbReference type="Pfam" id="PF13959">
    <property type="entry name" value="CTE_SPB4"/>
    <property type="match status" value="1"/>
</dbReference>
<dbReference type="Pfam" id="PF00270">
    <property type="entry name" value="DEAD"/>
    <property type="match status" value="1"/>
</dbReference>
<dbReference type="Pfam" id="PF00271">
    <property type="entry name" value="Helicase_C"/>
    <property type="match status" value="1"/>
</dbReference>
<dbReference type="SMART" id="SM00487">
    <property type="entry name" value="DEXDc"/>
    <property type="match status" value="1"/>
</dbReference>
<dbReference type="SMART" id="SM01178">
    <property type="entry name" value="DUF4217"/>
    <property type="match status" value="1"/>
</dbReference>
<dbReference type="SMART" id="SM00490">
    <property type="entry name" value="HELICc"/>
    <property type="match status" value="1"/>
</dbReference>
<dbReference type="SUPFAM" id="SSF52540">
    <property type="entry name" value="P-loop containing nucleoside triphosphate hydrolases"/>
    <property type="match status" value="1"/>
</dbReference>
<dbReference type="PROSITE" id="PS00039">
    <property type="entry name" value="DEAD_ATP_HELICASE"/>
    <property type="match status" value="1"/>
</dbReference>
<dbReference type="PROSITE" id="PS51192">
    <property type="entry name" value="HELICASE_ATP_BIND_1"/>
    <property type="match status" value="1"/>
</dbReference>
<dbReference type="PROSITE" id="PS51194">
    <property type="entry name" value="HELICASE_CTER"/>
    <property type="match status" value="1"/>
</dbReference>
<dbReference type="PROSITE" id="PS51195">
    <property type="entry name" value="Q_MOTIF"/>
    <property type="match status" value="1"/>
</dbReference>
<organism>
    <name type="scientific">Meyerozyma guilliermondii (strain ATCC 6260 / CBS 566 / DSM 6381 / JCM 1539 / NBRC 10279 / NRRL Y-324)</name>
    <name type="common">Yeast</name>
    <name type="synonym">Candida guilliermondii</name>
    <dbReference type="NCBI Taxonomy" id="294746"/>
    <lineage>
        <taxon>Eukaryota</taxon>
        <taxon>Fungi</taxon>
        <taxon>Dikarya</taxon>
        <taxon>Ascomycota</taxon>
        <taxon>Saccharomycotina</taxon>
        <taxon>Pichiomycetes</taxon>
        <taxon>Debaryomycetaceae</taxon>
        <taxon>Meyerozyma</taxon>
    </lineage>
</organism>